<reference key="1">
    <citation type="journal article" date="2006" name="Science">
        <title>The genome of black cottonwood, Populus trichocarpa (Torr. &amp; Gray).</title>
        <authorList>
            <person name="Tuskan G.A."/>
            <person name="Difazio S."/>
            <person name="Jansson S."/>
            <person name="Bohlmann J."/>
            <person name="Grigoriev I."/>
            <person name="Hellsten U."/>
            <person name="Putnam N."/>
            <person name="Ralph S."/>
            <person name="Rombauts S."/>
            <person name="Salamov A."/>
            <person name="Schein J."/>
            <person name="Sterck L."/>
            <person name="Aerts A."/>
            <person name="Bhalerao R.R."/>
            <person name="Bhalerao R.P."/>
            <person name="Blaudez D."/>
            <person name="Boerjan W."/>
            <person name="Brun A."/>
            <person name="Brunner A."/>
            <person name="Busov V."/>
            <person name="Campbell M."/>
            <person name="Carlson J."/>
            <person name="Chalot M."/>
            <person name="Chapman J."/>
            <person name="Chen G.-L."/>
            <person name="Cooper D."/>
            <person name="Coutinho P.M."/>
            <person name="Couturier J."/>
            <person name="Covert S."/>
            <person name="Cronk Q."/>
            <person name="Cunningham R."/>
            <person name="Davis J."/>
            <person name="Degroeve S."/>
            <person name="Dejardin A."/>
            <person name="dePamphilis C.W."/>
            <person name="Detter J."/>
            <person name="Dirks B."/>
            <person name="Dubchak I."/>
            <person name="Duplessis S."/>
            <person name="Ehlting J."/>
            <person name="Ellis B."/>
            <person name="Gendler K."/>
            <person name="Goodstein D."/>
            <person name="Gribskov M."/>
            <person name="Grimwood J."/>
            <person name="Groover A."/>
            <person name="Gunter L."/>
            <person name="Hamberger B."/>
            <person name="Heinze B."/>
            <person name="Helariutta Y."/>
            <person name="Henrissat B."/>
            <person name="Holligan D."/>
            <person name="Holt R."/>
            <person name="Huang W."/>
            <person name="Islam-Faridi N."/>
            <person name="Jones S."/>
            <person name="Jones-Rhoades M."/>
            <person name="Jorgensen R."/>
            <person name="Joshi C."/>
            <person name="Kangasjaervi J."/>
            <person name="Karlsson J."/>
            <person name="Kelleher C."/>
            <person name="Kirkpatrick R."/>
            <person name="Kirst M."/>
            <person name="Kohler A."/>
            <person name="Kalluri U."/>
            <person name="Larimer F."/>
            <person name="Leebens-Mack J."/>
            <person name="Leple J.-C."/>
            <person name="Locascio P."/>
            <person name="Lou Y."/>
            <person name="Lucas S."/>
            <person name="Martin F."/>
            <person name="Montanini B."/>
            <person name="Napoli C."/>
            <person name="Nelson D.R."/>
            <person name="Nelson C."/>
            <person name="Nieminen K."/>
            <person name="Nilsson O."/>
            <person name="Pereda V."/>
            <person name="Peter G."/>
            <person name="Philippe R."/>
            <person name="Pilate G."/>
            <person name="Poliakov A."/>
            <person name="Razumovskaya J."/>
            <person name="Richardson P."/>
            <person name="Rinaldi C."/>
            <person name="Ritland K."/>
            <person name="Rouze P."/>
            <person name="Ryaboy D."/>
            <person name="Schmutz J."/>
            <person name="Schrader J."/>
            <person name="Segerman B."/>
            <person name="Shin H."/>
            <person name="Siddiqui A."/>
            <person name="Sterky F."/>
            <person name="Terry A."/>
            <person name="Tsai C.-J."/>
            <person name="Uberbacher E."/>
            <person name="Unneberg P."/>
            <person name="Vahala J."/>
            <person name="Wall K."/>
            <person name="Wessler S."/>
            <person name="Yang G."/>
            <person name="Yin T."/>
            <person name="Douglas C."/>
            <person name="Marra M."/>
            <person name="Sandberg G."/>
            <person name="Van de Peer Y."/>
            <person name="Rokhsar D.S."/>
        </authorList>
    </citation>
    <scope>NUCLEOTIDE SEQUENCE [LARGE SCALE GENOMIC DNA]</scope>
    <source>
        <strain>cv. Nisqually</strain>
    </source>
</reference>
<reference key="2">
    <citation type="submission" date="2008-12" db="EMBL/GenBank/DDBJ databases">
        <authorList>
            <consortium name="US DOE Joint Genome Institute (JGI-PGF)"/>
            <person name="Grigoriev I.V."/>
            <person name="Terry A."/>
            <person name="Salamov A.A."/>
            <person name="Otillar R."/>
            <person name="Lou Y."/>
            <person name="Lucas S."/>
            <person name="Hammon N."/>
            <person name="Glavina del Rio T."/>
            <person name="Detter J."/>
            <person name="Kalin E."/>
            <person name="Tice H."/>
            <person name="Pitluck S."/>
            <person name="Chapman J."/>
            <person name="Putnam N.H."/>
            <person name="Brunner A."/>
            <person name="Busov V."/>
            <person name="Campbell M."/>
            <person name="Chalot M."/>
            <person name="Covert S."/>
            <person name="Davis J."/>
            <person name="DiFazio S."/>
            <person name="Gribskov M."/>
            <person name="Gunter L."/>
            <person name="Hamberger B."/>
            <person name="Jansson S."/>
            <person name="Joshi C."/>
            <person name="Larimer F."/>
            <person name="Martin F."/>
            <person name="Napoli C."/>
            <person name="Nelson D."/>
            <person name="Ralph S."/>
            <person name="Rombauts S."/>
            <person name="Rouze P."/>
            <person name="Schrader J."/>
            <person name="Tsai C."/>
            <person name="Vahala J."/>
            <person name="Tuskan G."/>
            <person name="Rokhsar D."/>
        </authorList>
    </citation>
    <scope>GENOME REANNOTATION</scope>
    <source>
        <strain>cv. Nisqually</strain>
    </source>
</reference>
<reference key="3">
    <citation type="submission" date="2002-10" db="EMBL/GenBank/DDBJ databases">
        <title>The poplar tree transcriptome: Analysis of expressed sequence tags from multiple libraries.</title>
        <authorList>
            <consortium name="US DOE Joint Genome Institute (JGI-PGF)"/>
        </authorList>
    </citation>
    <scope>NUCLEOTIDE SEQUENCE [LARGE SCALE MRNA] OF 1-180</scope>
    <source>
        <tissue>Flower</tissue>
    </source>
</reference>
<reference key="4">
    <citation type="journal article" date="2014" name="Plant Physiol.">
        <title>Functional and evolutionary analysis of the CASPARIAN STRIP MEMBRANE DOMAIN PROTEIN family.</title>
        <authorList>
            <person name="Roppolo D."/>
            <person name="Boeckmann B."/>
            <person name="Pfister A."/>
            <person name="Boutet E."/>
            <person name="Rubio M.C."/>
            <person name="Denervaud-Tendon V."/>
            <person name="Vermeer J.E."/>
            <person name="Gheyselinck J."/>
            <person name="Xenarios I."/>
            <person name="Geldner N."/>
        </authorList>
    </citation>
    <scope>GENE FAMILY</scope>
    <scope>NOMENCLATURE</scope>
</reference>
<comment type="subunit">
    <text evidence="1">Homodimer and heterodimers.</text>
</comment>
<comment type="subcellular location">
    <subcellularLocation>
        <location evidence="1">Cell membrane</location>
        <topology evidence="1">Multi-pass membrane protein</topology>
    </subcellularLocation>
</comment>
<comment type="similarity">
    <text evidence="3">Belongs to the Casparian strip membrane proteins (CASP) family.</text>
</comment>
<comment type="sequence caution" evidence="3">
    <conflict type="erroneous gene model prediction">
        <sequence resource="EMBL-CDS" id="EEF05866"/>
    </conflict>
</comment>
<gene>
    <name type="ORF">POPTRDRAFT_824792</name>
</gene>
<keyword id="KW-1003">Cell membrane</keyword>
<keyword id="KW-0472">Membrane</keyword>
<keyword id="KW-1185">Reference proteome</keyword>
<keyword id="KW-0812">Transmembrane</keyword>
<keyword id="KW-1133">Transmembrane helix</keyword>
<evidence type="ECO:0000250" key="1"/>
<evidence type="ECO:0000255" key="2"/>
<evidence type="ECO:0000305" key="3"/>
<name>CSPLH_POPTR</name>
<accession>B9IFI5</accession>
<organism>
    <name type="scientific">Populus trichocarpa</name>
    <name type="common">Western balsam poplar</name>
    <name type="synonym">Populus balsamifera subsp. trichocarpa</name>
    <dbReference type="NCBI Taxonomy" id="3694"/>
    <lineage>
        <taxon>Eukaryota</taxon>
        <taxon>Viridiplantae</taxon>
        <taxon>Streptophyta</taxon>
        <taxon>Embryophyta</taxon>
        <taxon>Tracheophyta</taxon>
        <taxon>Spermatophyta</taxon>
        <taxon>Magnoliopsida</taxon>
        <taxon>eudicotyledons</taxon>
        <taxon>Gunneridae</taxon>
        <taxon>Pentapetalae</taxon>
        <taxon>rosids</taxon>
        <taxon>fabids</taxon>
        <taxon>Malpighiales</taxon>
        <taxon>Salicaceae</taxon>
        <taxon>Saliceae</taxon>
        <taxon>Populus</taxon>
    </lineage>
</organism>
<dbReference type="EMBL" id="CM009304">
    <property type="protein sequence ID" value="EEF05866.2"/>
    <property type="status" value="ALT_SEQ"/>
    <property type="molecule type" value="Genomic_DNA"/>
</dbReference>
<dbReference type="EMBL" id="BU878230">
    <property type="status" value="NOT_ANNOTATED_CDS"/>
    <property type="molecule type" value="mRNA"/>
</dbReference>
<dbReference type="SMR" id="B9IFI5"/>
<dbReference type="STRING" id="3694.B9IFI5"/>
<dbReference type="EnsemblPlants" id="Potri.015G103600.1.v4.1">
    <property type="protein sequence ID" value="Potri.015G103600.1.v4.1"/>
    <property type="gene ID" value="Potri.015G103600.v4.1"/>
</dbReference>
<dbReference type="Gramene" id="Potri.015G103600.1.v4.1">
    <property type="protein sequence ID" value="Potri.015G103600.1.v4.1"/>
    <property type="gene ID" value="Potri.015G103600.v4.1"/>
</dbReference>
<dbReference type="InParanoid" id="B9IFI5"/>
<dbReference type="OMA" id="WVIFTAN"/>
<dbReference type="OrthoDB" id="1904499at2759"/>
<dbReference type="Proteomes" id="UP000006729">
    <property type="component" value="Chromosome 15"/>
</dbReference>
<dbReference type="GO" id="GO:0005886">
    <property type="term" value="C:plasma membrane"/>
    <property type="evidence" value="ECO:0007669"/>
    <property type="project" value="UniProtKB-SubCell"/>
</dbReference>
<dbReference type="InterPro" id="IPR006459">
    <property type="entry name" value="CASP/CASPL"/>
</dbReference>
<dbReference type="InterPro" id="IPR006702">
    <property type="entry name" value="CASP_dom"/>
</dbReference>
<dbReference type="InterPro" id="IPR044173">
    <property type="entry name" value="CASPL"/>
</dbReference>
<dbReference type="NCBIfam" id="TIGR01569">
    <property type="entry name" value="A_tha_TIGR01569"/>
    <property type="match status" value="1"/>
</dbReference>
<dbReference type="PANTHER" id="PTHR36488">
    <property type="entry name" value="CASP-LIKE PROTEIN 1U1"/>
    <property type="match status" value="1"/>
</dbReference>
<dbReference type="PANTHER" id="PTHR36488:SF8">
    <property type="entry name" value="CASP-LIKE PROTEIN 1U1"/>
    <property type="match status" value="1"/>
</dbReference>
<dbReference type="Pfam" id="PF04535">
    <property type="entry name" value="CASP_dom"/>
    <property type="match status" value="1"/>
</dbReference>
<proteinExistence type="evidence at transcript level"/>
<feature type="chain" id="PRO_0000376089" description="CASP-like protein 1F1">
    <location>
        <begin position="1"/>
        <end position="181"/>
    </location>
</feature>
<feature type="topological domain" description="Cytoplasmic" evidence="2">
    <location>
        <begin position="1"/>
        <end position="18"/>
    </location>
</feature>
<feature type="transmembrane region" description="Helical" evidence="2">
    <location>
        <begin position="19"/>
        <end position="39"/>
    </location>
</feature>
<feature type="topological domain" description="Extracellular" evidence="2">
    <location>
        <begin position="40"/>
        <end position="70"/>
    </location>
</feature>
<feature type="transmembrane region" description="Helical" evidence="2">
    <location>
        <begin position="71"/>
        <end position="91"/>
    </location>
</feature>
<feature type="topological domain" description="Cytoplasmic" evidence="2">
    <location>
        <begin position="92"/>
        <end position="100"/>
    </location>
</feature>
<feature type="transmembrane region" description="Helical" evidence="2">
    <location>
        <begin position="101"/>
        <end position="121"/>
    </location>
</feature>
<feature type="topological domain" description="Extracellular" evidence="2">
    <location>
        <begin position="122"/>
        <end position="152"/>
    </location>
</feature>
<feature type="transmembrane region" description="Helical" evidence="2">
    <location>
        <begin position="153"/>
        <end position="173"/>
    </location>
</feature>
<feature type="topological domain" description="Cytoplasmic" evidence="2">
    <location>
        <begin position="174"/>
        <end position="181"/>
    </location>
</feature>
<feature type="sequence conflict" description="In Ref. 3; BU878230." evidence="3" ref="3">
    <original>P</original>
    <variation>A</variation>
    <location>
        <position position="2"/>
    </location>
</feature>
<feature type="sequence conflict" description="In Ref. 3; BU878230." evidence="3" ref="3">
    <original>ME</original>
    <variation>NG</variation>
    <location>
        <begin position="179"/>
        <end position="180"/>
    </location>
</feature>
<protein>
    <recommendedName>
        <fullName>CASP-like protein 1F1</fullName>
        <shortName>PtCASPL1F1</shortName>
    </recommendedName>
</protein>
<sequence>MPNNEAKFSVNQPLKTQKLFIGVQIFFRIVAIAASVASSWLMITSKQVIDIGGIVLDARYSYSPEFKFLAFTNIVVGCFSLLSLLFLVLVVRQGSNPNHYFFLFLHDLAMMSLVVGGCAAATTVGFLGKHGNSHTGWMQICDNFGKFCNRAQTSVTISYLNLICLSILTITSASKSRKMEA</sequence>